<accession>B1IHS3</accession>
<protein>
    <recommendedName>
        <fullName evidence="1">Ribonuclease P protein component</fullName>
        <shortName evidence="1">RNase P protein</shortName>
        <shortName evidence="1">RNaseP protein</shortName>
        <ecNumber evidence="1">3.1.26.5</ecNumber>
    </recommendedName>
    <alternativeName>
        <fullName evidence="1">Protein C5</fullName>
    </alternativeName>
</protein>
<reference key="1">
    <citation type="journal article" date="2007" name="PLoS ONE">
        <title>Analysis of the neurotoxin complex genes in Clostridium botulinum A1-A4 and B1 strains: BoNT/A3, /Ba4 and /B1 clusters are located within plasmids.</title>
        <authorList>
            <person name="Smith T.J."/>
            <person name="Hill K.K."/>
            <person name="Foley B.T."/>
            <person name="Detter J.C."/>
            <person name="Munk A.C."/>
            <person name="Bruce D.C."/>
            <person name="Doggett N.A."/>
            <person name="Smith L.A."/>
            <person name="Marks J.D."/>
            <person name="Xie G."/>
            <person name="Brettin T.S."/>
        </authorList>
    </citation>
    <scope>NUCLEOTIDE SEQUENCE [LARGE SCALE GENOMIC DNA]</scope>
    <source>
        <strain>Okra / Type B1</strain>
    </source>
</reference>
<evidence type="ECO:0000255" key="1">
    <source>
        <dbReference type="HAMAP-Rule" id="MF_00227"/>
    </source>
</evidence>
<feature type="chain" id="PRO_1000100352" description="Ribonuclease P protein component">
    <location>
        <begin position="1"/>
        <end position="111"/>
    </location>
</feature>
<gene>
    <name evidence="1" type="primary">rnpA</name>
    <name type="ordered locus">CLD_0827</name>
</gene>
<organism>
    <name type="scientific">Clostridium botulinum (strain Okra / Type B1)</name>
    <dbReference type="NCBI Taxonomy" id="498213"/>
    <lineage>
        <taxon>Bacteria</taxon>
        <taxon>Bacillati</taxon>
        <taxon>Bacillota</taxon>
        <taxon>Clostridia</taxon>
        <taxon>Eubacteriales</taxon>
        <taxon>Clostridiaceae</taxon>
        <taxon>Clostridium</taxon>
    </lineage>
</organism>
<name>RNPA_CLOBK</name>
<sequence length="111" mass="13184">MKENKIRKNKEFRHVYRRGKSYSNRLLVLYICKNRCNINRLGVSVSKKVGKSVIRNRVKRLIKESYRLNLDENMKKGYDLVFIARNSSNDRDYKDIESALINLLKKAGIYN</sequence>
<comment type="function">
    <text evidence="1">RNaseP catalyzes the removal of the 5'-leader sequence from pre-tRNA to produce the mature 5'-terminus. It can also cleave other RNA substrates such as 4.5S RNA. The protein component plays an auxiliary but essential role in vivo by binding to the 5'-leader sequence and broadening the substrate specificity of the ribozyme.</text>
</comment>
<comment type="catalytic activity">
    <reaction evidence="1">
        <text>Endonucleolytic cleavage of RNA, removing 5'-extranucleotides from tRNA precursor.</text>
        <dbReference type="EC" id="3.1.26.5"/>
    </reaction>
</comment>
<comment type="subunit">
    <text evidence="1">Consists of a catalytic RNA component (M1 or rnpB) and a protein subunit.</text>
</comment>
<comment type="similarity">
    <text evidence="1">Belongs to the RnpA family.</text>
</comment>
<proteinExistence type="inferred from homology"/>
<dbReference type="EC" id="3.1.26.5" evidence="1"/>
<dbReference type="EMBL" id="CP000939">
    <property type="protein sequence ID" value="ACA43495.1"/>
    <property type="molecule type" value="Genomic_DNA"/>
</dbReference>
<dbReference type="RefSeq" id="WP_003359393.1">
    <property type="nucleotide sequence ID" value="NC_010516.1"/>
</dbReference>
<dbReference type="SMR" id="B1IHS3"/>
<dbReference type="GeneID" id="5204338"/>
<dbReference type="KEGG" id="cbb:CLD_0827"/>
<dbReference type="HOGENOM" id="CLU_117179_9_3_9"/>
<dbReference type="Proteomes" id="UP000008541">
    <property type="component" value="Chromosome"/>
</dbReference>
<dbReference type="GO" id="GO:0030677">
    <property type="term" value="C:ribonuclease P complex"/>
    <property type="evidence" value="ECO:0007669"/>
    <property type="project" value="TreeGrafter"/>
</dbReference>
<dbReference type="GO" id="GO:0042781">
    <property type="term" value="F:3'-tRNA processing endoribonuclease activity"/>
    <property type="evidence" value="ECO:0007669"/>
    <property type="project" value="TreeGrafter"/>
</dbReference>
<dbReference type="GO" id="GO:0004526">
    <property type="term" value="F:ribonuclease P activity"/>
    <property type="evidence" value="ECO:0007669"/>
    <property type="project" value="UniProtKB-UniRule"/>
</dbReference>
<dbReference type="GO" id="GO:0000049">
    <property type="term" value="F:tRNA binding"/>
    <property type="evidence" value="ECO:0007669"/>
    <property type="project" value="UniProtKB-UniRule"/>
</dbReference>
<dbReference type="GO" id="GO:0001682">
    <property type="term" value="P:tRNA 5'-leader removal"/>
    <property type="evidence" value="ECO:0007669"/>
    <property type="project" value="UniProtKB-UniRule"/>
</dbReference>
<dbReference type="FunFam" id="3.30.230.10:FF:000106">
    <property type="entry name" value="Ribonuclease P protein component"/>
    <property type="match status" value="1"/>
</dbReference>
<dbReference type="Gene3D" id="3.30.230.10">
    <property type="match status" value="1"/>
</dbReference>
<dbReference type="HAMAP" id="MF_00227">
    <property type="entry name" value="RNase_P"/>
    <property type="match status" value="1"/>
</dbReference>
<dbReference type="InterPro" id="IPR020568">
    <property type="entry name" value="Ribosomal_Su5_D2-typ_SF"/>
</dbReference>
<dbReference type="InterPro" id="IPR014721">
    <property type="entry name" value="Ribsml_uS5_D2-typ_fold_subgr"/>
</dbReference>
<dbReference type="InterPro" id="IPR000100">
    <property type="entry name" value="RNase_P"/>
</dbReference>
<dbReference type="NCBIfam" id="TIGR00188">
    <property type="entry name" value="rnpA"/>
    <property type="match status" value="1"/>
</dbReference>
<dbReference type="PANTHER" id="PTHR33992">
    <property type="entry name" value="RIBONUCLEASE P PROTEIN COMPONENT"/>
    <property type="match status" value="1"/>
</dbReference>
<dbReference type="PANTHER" id="PTHR33992:SF1">
    <property type="entry name" value="RIBONUCLEASE P PROTEIN COMPONENT"/>
    <property type="match status" value="1"/>
</dbReference>
<dbReference type="Pfam" id="PF00825">
    <property type="entry name" value="Ribonuclease_P"/>
    <property type="match status" value="1"/>
</dbReference>
<dbReference type="SUPFAM" id="SSF54211">
    <property type="entry name" value="Ribosomal protein S5 domain 2-like"/>
    <property type="match status" value="1"/>
</dbReference>
<keyword id="KW-0255">Endonuclease</keyword>
<keyword id="KW-0378">Hydrolase</keyword>
<keyword id="KW-0540">Nuclease</keyword>
<keyword id="KW-0694">RNA-binding</keyword>
<keyword id="KW-0819">tRNA processing</keyword>